<evidence type="ECO:0000255" key="1">
    <source>
        <dbReference type="HAMAP-Rule" id="MF_00444"/>
    </source>
</evidence>
<dbReference type="EC" id="3.4.21.92" evidence="1"/>
<dbReference type="EMBL" id="CP000463">
    <property type="protein sequence ID" value="ABJ06448.1"/>
    <property type="molecule type" value="Genomic_DNA"/>
</dbReference>
<dbReference type="SMR" id="Q07NN6"/>
<dbReference type="STRING" id="316055.RPE_2510"/>
<dbReference type="MEROPS" id="S14.001"/>
<dbReference type="KEGG" id="rpe:RPE_2510"/>
<dbReference type="eggNOG" id="COG0740">
    <property type="taxonomic scope" value="Bacteria"/>
</dbReference>
<dbReference type="HOGENOM" id="CLU_058707_3_2_5"/>
<dbReference type="OrthoDB" id="9802800at2"/>
<dbReference type="GO" id="GO:0005737">
    <property type="term" value="C:cytoplasm"/>
    <property type="evidence" value="ECO:0007669"/>
    <property type="project" value="UniProtKB-SubCell"/>
</dbReference>
<dbReference type="GO" id="GO:0009368">
    <property type="term" value="C:endopeptidase Clp complex"/>
    <property type="evidence" value="ECO:0007669"/>
    <property type="project" value="TreeGrafter"/>
</dbReference>
<dbReference type="GO" id="GO:0004176">
    <property type="term" value="F:ATP-dependent peptidase activity"/>
    <property type="evidence" value="ECO:0007669"/>
    <property type="project" value="InterPro"/>
</dbReference>
<dbReference type="GO" id="GO:0051117">
    <property type="term" value="F:ATPase binding"/>
    <property type="evidence" value="ECO:0007669"/>
    <property type="project" value="TreeGrafter"/>
</dbReference>
<dbReference type="GO" id="GO:0004252">
    <property type="term" value="F:serine-type endopeptidase activity"/>
    <property type="evidence" value="ECO:0007669"/>
    <property type="project" value="UniProtKB-UniRule"/>
</dbReference>
<dbReference type="GO" id="GO:0006515">
    <property type="term" value="P:protein quality control for misfolded or incompletely synthesized proteins"/>
    <property type="evidence" value="ECO:0007669"/>
    <property type="project" value="TreeGrafter"/>
</dbReference>
<dbReference type="CDD" id="cd07017">
    <property type="entry name" value="S14_ClpP_2"/>
    <property type="match status" value="1"/>
</dbReference>
<dbReference type="FunFam" id="3.90.226.10:FF:000001">
    <property type="entry name" value="ATP-dependent Clp protease proteolytic subunit"/>
    <property type="match status" value="1"/>
</dbReference>
<dbReference type="Gene3D" id="3.90.226.10">
    <property type="entry name" value="2-enoyl-CoA Hydratase, Chain A, domain 1"/>
    <property type="match status" value="1"/>
</dbReference>
<dbReference type="HAMAP" id="MF_00444">
    <property type="entry name" value="ClpP"/>
    <property type="match status" value="1"/>
</dbReference>
<dbReference type="InterPro" id="IPR001907">
    <property type="entry name" value="ClpP"/>
</dbReference>
<dbReference type="InterPro" id="IPR029045">
    <property type="entry name" value="ClpP/crotonase-like_dom_sf"/>
</dbReference>
<dbReference type="InterPro" id="IPR023562">
    <property type="entry name" value="ClpP/TepA"/>
</dbReference>
<dbReference type="InterPro" id="IPR033135">
    <property type="entry name" value="ClpP_His_AS"/>
</dbReference>
<dbReference type="NCBIfam" id="NF001368">
    <property type="entry name" value="PRK00277.1"/>
    <property type="match status" value="1"/>
</dbReference>
<dbReference type="NCBIfam" id="NF009205">
    <property type="entry name" value="PRK12553.1"/>
    <property type="match status" value="1"/>
</dbReference>
<dbReference type="PANTHER" id="PTHR10381">
    <property type="entry name" value="ATP-DEPENDENT CLP PROTEASE PROTEOLYTIC SUBUNIT"/>
    <property type="match status" value="1"/>
</dbReference>
<dbReference type="PANTHER" id="PTHR10381:SF70">
    <property type="entry name" value="ATP-DEPENDENT CLP PROTEASE PROTEOLYTIC SUBUNIT"/>
    <property type="match status" value="1"/>
</dbReference>
<dbReference type="Pfam" id="PF00574">
    <property type="entry name" value="CLP_protease"/>
    <property type="match status" value="1"/>
</dbReference>
<dbReference type="PRINTS" id="PR00127">
    <property type="entry name" value="CLPPROTEASEP"/>
</dbReference>
<dbReference type="SUPFAM" id="SSF52096">
    <property type="entry name" value="ClpP/crotonase"/>
    <property type="match status" value="1"/>
</dbReference>
<dbReference type="PROSITE" id="PS00382">
    <property type="entry name" value="CLP_PROTEASE_HIS"/>
    <property type="match status" value="1"/>
</dbReference>
<protein>
    <recommendedName>
        <fullName evidence="1">ATP-dependent Clp protease proteolytic subunit</fullName>
        <ecNumber evidence="1">3.4.21.92</ecNumber>
    </recommendedName>
    <alternativeName>
        <fullName evidence="1">Endopeptidase Clp</fullName>
    </alternativeName>
</protein>
<keyword id="KW-0963">Cytoplasm</keyword>
<keyword id="KW-0378">Hydrolase</keyword>
<keyword id="KW-0645">Protease</keyword>
<keyword id="KW-0720">Serine protease</keyword>
<reference key="1">
    <citation type="submission" date="2006-09" db="EMBL/GenBank/DDBJ databases">
        <title>Complete sequence of Rhodopseudomonas palustris BisA53.</title>
        <authorList>
            <consortium name="US DOE Joint Genome Institute"/>
            <person name="Copeland A."/>
            <person name="Lucas S."/>
            <person name="Lapidus A."/>
            <person name="Barry K."/>
            <person name="Detter J.C."/>
            <person name="Glavina del Rio T."/>
            <person name="Hammon N."/>
            <person name="Israni S."/>
            <person name="Dalin E."/>
            <person name="Tice H."/>
            <person name="Pitluck S."/>
            <person name="Chain P."/>
            <person name="Malfatti S."/>
            <person name="Shin M."/>
            <person name="Vergez L."/>
            <person name="Schmutz J."/>
            <person name="Larimer F."/>
            <person name="Land M."/>
            <person name="Hauser L."/>
            <person name="Pelletier D.A."/>
            <person name="Kyrpides N."/>
            <person name="Kim E."/>
            <person name="Harwood C.S."/>
            <person name="Oda Y."/>
            <person name="Richardson P."/>
        </authorList>
    </citation>
    <scope>NUCLEOTIDE SEQUENCE [LARGE SCALE GENOMIC DNA]</scope>
    <source>
        <strain>BisA53</strain>
    </source>
</reference>
<proteinExistence type="inferred from homology"/>
<feature type="chain" id="PRO_1000026117" description="ATP-dependent Clp protease proteolytic subunit">
    <location>
        <begin position="1"/>
        <end position="211"/>
    </location>
</feature>
<feature type="active site" description="Nucleophile" evidence="1">
    <location>
        <position position="106"/>
    </location>
</feature>
<feature type="active site" evidence="1">
    <location>
        <position position="131"/>
    </location>
</feature>
<sequence>MRDPVETYMNLVPMVVEQTNRGERAYDIFSRLLKERIIFLTGPVEDGMSTLVVAQLLFLEAENPKKEISMYINSPGGVVTSGLAIYDTMQFIRPPVSTLCTGQAASMGSLLLCAGAKDMRFSLPNARIMVHQPSGGFQGQATDIMLHAQEILNLKKRLNEIYVKHTGQTYKAIEDALERDKFLTADMARDFGLVDKVIDKRPEEASPAKPV</sequence>
<name>CLPP_RHOP5</name>
<accession>Q07NN6</accession>
<comment type="function">
    <text evidence="1">Cleaves peptides in various proteins in a process that requires ATP hydrolysis. Has a chymotrypsin-like activity. Plays a major role in the degradation of misfolded proteins.</text>
</comment>
<comment type="catalytic activity">
    <reaction evidence="1">
        <text>Hydrolysis of proteins to small peptides in the presence of ATP and magnesium. alpha-casein is the usual test substrate. In the absence of ATP, only oligopeptides shorter than five residues are hydrolyzed (such as succinyl-Leu-Tyr-|-NHMec, and Leu-Tyr-Leu-|-Tyr-Trp, in which cleavage of the -Tyr-|-Leu- and -Tyr-|-Trp bonds also occurs).</text>
        <dbReference type="EC" id="3.4.21.92"/>
    </reaction>
</comment>
<comment type="subunit">
    <text evidence="1">Fourteen ClpP subunits assemble into 2 heptameric rings which stack back to back to give a disk-like structure with a central cavity, resembling the structure of eukaryotic proteasomes.</text>
</comment>
<comment type="subcellular location">
    <subcellularLocation>
        <location evidence="1">Cytoplasm</location>
    </subcellularLocation>
</comment>
<comment type="similarity">
    <text evidence="1">Belongs to the peptidase S14 family.</text>
</comment>
<organism>
    <name type="scientific">Rhodopseudomonas palustris (strain BisA53)</name>
    <dbReference type="NCBI Taxonomy" id="316055"/>
    <lineage>
        <taxon>Bacteria</taxon>
        <taxon>Pseudomonadati</taxon>
        <taxon>Pseudomonadota</taxon>
        <taxon>Alphaproteobacteria</taxon>
        <taxon>Hyphomicrobiales</taxon>
        <taxon>Nitrobacteraceae</taxon>
        <taxon>Rhodopseudomonas</taxon>
    </lineage>
</organism>
<gene>
    <name evidence="1" type="primary">clpP</name>
    <name type="ordered locus">RPE_2510</name>
</gene>